<protein>
    <recommendedName>
        <fullName evidence="1">Envelope glycoprotein N</fullName>
    </recommendedName>
</protein>
<name>GN_HHV11</name>
<comment type="function">
    <text evidence="1 3 5 6">Envelope glycoprotein necessary for proper maturation of gM and modulation of its membrane fusion activity. Also plays a critical role in virion morphogenesis.</text>
</comment>
<comment type="subunit">
    <text evidence="1 6">Interacts (via N-terminus) with gM (via N-terminus). The gM-gN heterodimer forms the gCII complex.</text>
</comment>
<comment type="subcellular location">
    <subcellularLocation>
        <location evidence="1 4">Virion membrane</location>
        <topology evidence="1">Single-pass type I membrane protein</topology>
    </subcellularLocation>
    <subcellularLocation>
        <location evidence="1">Host membrane</location>
        <topology evidence="1">Single-pass type I membrane protein</topology>
    </subcellularLocation>
    <subcellularLocation>
        <location evidence="1 5 6">Host Golgi apparatus</location>
        <location evidence="1 5 6">Host trans-Golgi network</location>
    </subcellularLocation>
    <text evidence="1 5">When coexpressed with gM, localizes in the host trans-Golgi network.</text>
</comment>
<comment type="similarity">
    <text evidence="1">Belongs to the herpesviridae glycoprotein N family.</text>
</comment>
<evidence type="ECO:0000255" key="1">
    <source>
        <dbReference type="HAMAP-Rule" id="MF_04037"/>
    </source>
</evidence>
<evidence type="ECO:0000256" key="2">
    <source>
        <dbReference type="SAM" id="MobiDB-lite"/>
    </source>
</evidence>
<evidence type="ECO:0000269" key="3">
    <source>
    </source>
</evidence>
<evidence type="ECO:0000269" key="4">
    <source>
    </source>
</evidence>
<evidence type="ECO:0000269" key="5">
    <source>
    </source>
</evidence>
<evidence type="ECO:0000269" key="6">
    <source>
    </source>
</evidence>
<accession>O09800</accession>
<accession>B9VQH8</accession>
<feature type="signal peptide" evidence="1">
    <location>
        <begin position="1"/>
        <end position="23"/>
    </location>
</feature>
<feature type="chain" id="PRO_0000116098" description="Envelope glycoprotein N" evidence="1">
    <location>
        <begin position="24"/>
        <end position="91"/>
    </location>
</feature>
<feature type="topological domain" description="Virion surface" evidence="1">
    <location>
        <begin position="24"/>
        <end position="55"/>
    </location>
</feature>
<feature type="transmembrane region" description="Helical" evidence="1">
    <location>
        <begin position="56"/>
        <end position="76"/>
    </location>
</feature>
<feature type="topological domain" description="Intravirion" evidence="1">
    <location>
        <begin position="77"/>
        <end position="91"/>
    </location>
</feature>
<feature type="region of interest" description="Disordered" evidence="2">
    <location>
        <begin position="23"/>
        <end position="48"/>
    </location>
</feature>
<feature type="disulfide bond" description="Interchain (with gM)" evidence="1 6">
    <location>
        <position position="46"/>
    </location>
</feature>
<dbReference type="EMBL" id="X14112">
    <property type="protein sequence ID" value="CAA32300.1"/>
    <property type="molecule type" value="Genomic_DNA"/>
</dbReference>
<dbReference type="EMBL" id="FJ593289">
    <property type="protein sequence ID" value="ACM62273.1"/>
    <property type="molecule type" value="Genomic_DNA"/>
</dbReference>
<dbReference type="RefSeq" id="YP_009137125.1">
    <property type="nucleotide sequence ID" value="NC_001806.2"/>
</dbReference>
<dbReference type="PDB" id="8OSQ">
    <property type="method" value="NMR"/>
    <property type="chains" value="A=24-58"/>
</dbReference>
<dbReference type="PDBsum" id="8OSQ"/>
<dbReference type="SMR" id="O09800"/>
<dbReference type="ChEMBL" id="CHEMBL2364696"/>
<dbReference type="DrugCentral" id="O09800"/>
<dbReference type="GeneID" id="2703419"/>
<dbReference type="KEGG" id="vg:2703419"/>
<dbReference type="PRO" id="PR:O09800"/>
<dbReference type="Proteomes" id="UP000009294">
    <property type="component" value="Segment"/>
</dbReference>
<dbReference type="Proteomes" id="UP000180652">
    <property type="component" value="Segment"/>
</dbReference>
<dbReference type="GO" id="GO:0044177">
    <property type="term" value="C:host cell Golgi apparatus"/>
    <property type="evidence" value="ECO:0007669"/>
    <property type="project" value="UniProtKB-SubCell"/>
</dbReference>
<dbReference type="GO" id="GO:0033644">
    <property type="term" value="C:host cell membrane"/>
    <property type="evidence" value="ECO:0007669"/>
    <property type="project" value="UniProtKB-SubCell"/>
</dbReference>
<dbReference type="GO" id="GO:0016020">
    <property type="term" value="C:membrane"/>
    <property type="evidence" value="ECO:0007669"/>
    <property type="project" value="UniProtKB-KW"/>
</dbReference>
<dbReference type="GO" id="GO:0019031">
    <property type="term" value="C:viral envelope"/>
    <property type="evidence" value="ECO:0007669"/>
    <property type="project" value="UniProtKB-KW"/>
</dbReference>
<dbReference type="GO" id="GO:0055036">
    <property type="term" value="C:virion membrane"/>
    <property type="evidence" value="ECO:0007669"/>
    <property type="project" value="UniProtKB-SubCell"/>
</dbReference>
<dbReference type="HAMAP" id="MF_04037">
    <property type="entry name" value="HSV_GN"/>
    <property type="match status" value="1"/>
</dbReference>
<dbReference type="InterPro" id="IPR017376">
    <property type="entry name" value="Herpes_UL49A"/>
</dbReference>
<dbReference type="InterPro" id="IPR034707">
    <property type="entry name" value="HSV_GN"/>
</dbReference>
<dbReference type="PIRSF" id="PIRSF038075">
    <property type="entry name" value="Herpes_UL49A_env"/>
    <property type="match status" value="1"/>
</dbReference>
<organismHost>
    <name type="scientific">Homo sapiens</name>
    <name type="common">Human</name>
    <dbReference type="NCBI Taxonomy" id="9606"/>
</organismHost>
<organism>
    <name type="scientific">Human herpesvirus 1 (strain 17)</name>
    <name type="common">HHV-1</name>
    <name type="synonym">Human herpes simplex virus 1</name>
    <dbReference type="NCBI Taxonomy" id="10299"/>
    <lineage>
        <taxon>Viruses</taxon>
        <taxon>Duplodnaviria</taxon>
        <taxon>Heunggongvirae</taxon>
        <taxon>Peploviricota</taxon>
        <taxon>Herviviricetes</taxon>
        <taxon>Herpesvirales</taxon>
        <taxon>Orthoherpesviridae</taxon>
        <taxon>Alphaherpesvirinae</taxon>
        <taxon>Simplexvirus</taxon>
        <taxon>Simplexvirus humanalpha1</taxon>
        <taxon>Human herpesvirus 1</taxon>
    </lineage>
</organism>
<reference key="1">
    <citation type="journal article" date="1988" name="J. Gen. Virol.">
        <title>The complete DNA sequence of the long unique region in the genome of herpes simplex virus type 1.</title>
        <authorList>
            <person name="McGeoch D.J."/>
            <person name="Dalrymple M.A."/>
            <person name="Davison A.J."/>
            <person name="Dolan A."/>
            <person name="Frame M.C."/>
            <person name="McNab D."/>
            <person name="Perry L.J."/>
            <person name="Scott J.E."/>
            <person name="Taylor P."/>
        </authorList>
    </citation>
    <scope>NUCLEOTIDE SEQUENCE [LARGE SCALE GENOMIC DNA]</scope>
</reference>
<reference key="2">
    <citation type="submission" date="2008-12" db="EMBL/GenBank/DDBJ databases">
        <title>Herpes simplex virus type 1 bacterial artificial chromosome.</title>
        <authorList>
            <person name="Cunningham C."/>
            <person name="Davison A.J."/>
        </authorList>
    </citation>
    <scope>NUCLEOTIDE SEQUENCE [LARGE SCALE GENOMIC DNA]</scope>
    <source>
        <strain>17 syn+</strain>
    </source>
</reference>
<reference key="3">
    <citation type="journal article" date="2007" name="J. Virol.">
        <title>The carboxy-terminal domain of glycoprotein N of human cytomegalovirus is required for virion morphogenesis.</title>
        <authorList>
            <person name="Mach M."/>
            <person name="Osinski K."/>
            <person name="Kropff B."/>
            <person name="Schloetzer-Schrehardt U."/>
            <person name="Krzyzaniak M."/>
            <person name="Britt W."/>
        </authorList>
    </citation>
    <scope>FUNCTION</scope>
    <scope>SUBCELLULAR LOCATION</scope>
</reference>
<reference key="4">
    <citation type="journal article" date="2008" name="J. Virol.">
        <title>Comprehensive characterization of extracellular herpes simplex virus type 1 virions.</title>
        <authorList>
            <person name="Loret S."/>
            <person name="Guay G."/>
            <person name="Lippe R."/>
        </authorList>
    </citation>
    <scope>SUBCELLULAR LOCATION</scope>
    <source>
        <strain>F</strain>
    </source>
</reference>
<reference key="5">
    <citation type="journal article" date="2015" name="J. Virol.">
        <title>Herpes simplex virus 1 gN partners with gM to modulate the viral fusion machinery.</title>
        <authorList>
            <person name="El Kasmi I."/>
            <person name="Lippe R."/>
        </authorList>
    </citation>
    <scope>FUNCTION</scope>
    <scope>SUBCELLULAR LOCATION</scope>
</reference>
<reference key="6">
    <citation type="journal article" date="2016" name="Viruses">
        <title>Subcellular trafficking and functional relationship of the HSV-1 glycoproteins N and M.</title>
        <authorList>
            <person name="Striebinger H."/>
            <person name="Funk C."/>
            <person name="Raschbichler V."/>
            <person name="Bailer S.M."/>
        </authorList>
    </citation>
    <scope>FUNCTION</scope>
    <scope>DISULFIDE BOND</scope>
    <scope>SUBUNIT</scope>
    <scope>SUBCELLULAR LOCATION</scope>
</reference>
<gene>
    <name evidence="1" type="primary">gN</name>
    <name type="ORF">UL49.5</name>
    <name type="ORF">UL49A</name>
</gene>
<proteinExistence type="evidence at protein level"/>
<keyword id="KW-0002">3D-structure</keyword>
<keyword id="KW-1015">Disulfide bond</keyword>
<keyword id="KW-1040">Host Golgi apparatus</keyword>
<keyword id="KW-1043">Host membrane</keyword>
<keyword id="KW-0472">Membrane</keyword>
<keyword id="KW-1185">Reference proteome</keyword>
<keyword id="KW-0732">Signal</keyword>
<keyword id="KW-0812">Transmembrane</keyword>
<keyword id="KW-1133">Transmembrane helix</keyword>
<keyword id="KW-0261">Viral envelope protein</keyword>
<keyword id="KW-0946">Virion</keyword>
<sequence>MGPPRRVCRAGLLFVLLVALAAGDAGPRGEPPGEEGGRDGIGGARCETQNTGQMSAPGALVPFYVGMASMGVCIIAHVCQICQRLLAAGHA</sequence>